<organism>
    <name type="scientific">Pseudomonas putida (strain W619)</name>
    <dbReference type="NCBI Taxonomy" id="390235"/>
    <lineage>
        <taxon>Bacteria</taxon>
        <taxon>Pseudomonadati</taxon>
        <taxon>Pseudomonadota</taxon>
        <taxon>Gammaproteobacteria</taxon>
        <taxon>Pseudomonadales</taxon>
        <taxon>Pseudomonadaceae</taxon>
        <taxon>Pseudomonas</taxon>
    </lineage>
</organism>
<feature type="chain" id="PRO_0000376317" description="NADH-quinone oxidoreductase subunit B">
    <location>
        <begin position="1"/>
        <end position="225"/>
    </location>
</feature>
<feature type="binding site" evidence="1">
    <location>
        <position position="68"/>
    </location>
    <ligand>
        <name>[4Fe-4S] cluster</name>
        <dbReference type="ChEBI" id="CHEBI:49883"/>
    </ligand>
</feature>
<feature type="binding site" evidence="1">
    <location>
        <position position="69"/>
    </location>
    <ligand>
        <name>[4Fe-4S] cluster</name>
        <dbReference type="ChEBI" id="CHEBI:49883"/>
    </ligand>
</feature>
<feature type="binding site" evidence="1">
    <location>
        <position position="134"/>
    </location>
    <ligand>
        <name>[4Fe-4S] cluster</name>
        <dbReference type="ChEBI" id="CHEBI:49883"/>
    </ligand>
</feature>
<feature type="binding site" evidence="1">
    <location>
        <position position="163"/>
    </location>
    <ligand>
        <name>[4Fe-4S] cluster</name>
        <dbReference type="ChEBI" id="CHEBI:49883"/>
    </ligand>
</feature>
<comment type="function">
    <text evidence="1">NDH-1 shuttles electrons from NADH, via FMN and iron-sulfur (Fe-S) centers, to quinones in the respiratory chain. The immediate electron acceptor for the enzyme in this species is believed to be ubiquinone. Couples the redox reaction to proton translocation (for every two electrons transferred, four hydrogen ions are translocated across the cytoplasmic membrane), and thus conserves the redox energy in a proton gradient.</text>
</comment>
<comment type="catalytic activity">
    <reaction evidence="1">
        <text>a quinone + NADH + 5 H(+)(in) = a quinol + NAD(+) + 4 H(+)(out)</text>
        <dbReference type="Rhea" id="RHEA:57888"/>
        <dbReference type="ChEBI" id="CHEBI:15378"/>
        <dbReference type="ChEBI" id="CHEBI:24646"/>
        <dbReference type="ChEBI" id="CHEBI:57540"/>
        <dbReference type="ChEBI" id="CHEBI:57945"/>
        <dbReference type="ChEBI" id="CHEBI:132124"/>
    </reaction>
</comment>
<comment type="cofactor">
    <cofactor evidence="1">
        <name>[4Fe-4S] cluster</name>
        <dbReference type="ChEBI" id="CHEBI:49883"/>
    </cofactor>
    <text evidence="1">Binds 1 [4Fe-4S] cluster.</text>
</comment>
<comment type="subunit">
    <text evidence="1">NDH-1 is composed of 13 different subunits. Subunits NuoB, CD, E, F, and G constitute the peripheral sector of the complex.</text>
</comment>
<comment type="subcellular location">
    <subcellularLocation>
        <location evidence="1">Cell inner membrane</location>
        <topology evidence="1">Peripheral membrane protein</topology>
        <orientation evidence="1">Cytoplasmic side</orientation>
    </subcellularLocation>
</comment>
<comment type="similarity">
    <text evidence="1">Belongs to the complex I 20 kDa subunit family.</text>
</comment>
<proteinExistence type="inferred from homology"/>
<reference key="1">
    <citation type="submission" date="2008-02" db="EMBL/GenBank/DDBJ databases">
        <title>Complete sequence of Pseudomonas putida W619.</title>
        <authorList>
            <person name="Copeland A."/>
            <person name="Lucas S."/>
            <person name="Lapidus A."/>
            <person name="Barry K."/>
            <person name="Detter J.C."/>
            <person name="Glavina del Rio T."/>
            <person name="Dalin E."/>
            <person name="Tice H."/>
            <person name="Pitluck S."/>
            <person name="Chain P."/>
            <person name="Malfatti S."/>
            <person name="Shin M."/>
            <person name="Vergez L."/>
            <person name="Schmutz J."/>
            <person name="Larimer F."/>
            <person name="Land M."/>
            <person name="Hauser L."/>
            <person name="Kyrpides N."/>
            <person name="Kim E."/>
            <person name="Taghavi S."/>
            <person name="Vangronsveld D."/>
            <person name="van der Lelie D."/>
            <person name="Richardson P."/>
        </authorList>
    </citation>
    <scope>NUCLEOTIDE SEQUENCE [LARGE SCALE GENOMIC DNA]</scope>
    <source>
        <strain>W619</strain>
    </source>
</reference>
<keyword id="KW-0004">4Fe-4S</keyword>
<keyword id="KW-0997">Cell inner membrane</keyword>
<keyword id="KW-1003">Cell membrane</keyword>
<keyword id="KW-0408">Iron</keyword>
<keyword id="KW-0411">Iron-sulfur</keyword>
<keyword id="KW-0472">Membrane</keyword>
<keyword id="KW-0479">Metal-binding</keyword>
<keyword id="KW-0520">NAD</keyword>
<keyword id="KW-0874">Quinone</keyword>
<keyword id="KW-1278">Translocase</keyword>
<keyword id="KW-0813">Transport</keyword>
<keyword id="KW-0830">Ubiquinone</keyword>
<dbReference type="EC" id="7.1.1.-" evidence="1"/>
<dbReference type="EMBL" id="CP000949">
    <property type="protein sequence ID" value="ACA72375.1"/>
    <property type="molecule type" value="Genomic_DNA"/>
</dbReference>
<dbReference type="SMR" id="B1J6N3"/>
<dbReference type="STRING" id="390235.PputW619_1872"/>
<dbReference type="KEGG" id="ppw:PputW619_1872"/>
<dbReference type="eggNOG" id="COG0377">
    <property type="taxonomic scope" value="Bacteria"/>
</dbReference>
<dbReference type="HOGENOM" id="CLU_055737_7_3_6"/>
<dbReference type="OrthoDB" id="9786737at2"/>
<dbReference type="GO" id="GO:0005886">
    <property type="term" value="C:plasma membrane"/>
    <property type="evidence" value="ECO:0007669"/>
    <property type="project" value="UniProtKB-SubCell"/>
</dbReference>
<dbReference type="GO" id="GO:0045271">
    <property type="term" value="C:respiratory chain complex I"/>
    <property type="evidence" value="ECO:0007669"/>
    <property type="project" value="TreeGrafter"/>
</dbReference>
<dbReference type="GO" id="GO:0051539">
    <property type="term" value="F:4 iron, 4 sulfur cluster binding"/>
    <property type="evidence" value="ECO:0007669"/>
    <property type="project" value="UniProtKB-KW"/>
</dbReference>
<dbReference type="GO" id="GO:0005506">
    <property type="term" value="F:iron ion binding"/>
    <property type="evidence" value="ECO:0007669"/>
    <property type="project" value="UniProtKB-UniRule"/>
</dbReference>
<dbReference type="GO" id="GO:0008137">
    <property type="term" value="F:NADH dehydrogenase (ubiquinone) activity"/>
    <property type="evidence" value="ECO:0007669"/>
    <property type="project" value="InterPro"/>
</dbReference>
<dbReference type="GO" id="GO:0050136">
    <property type="term" value="F:NADH:ubiquinone reductase (non-electrogenic) activity"/>
    <property type="evidence" value="ECO:0007669"/>
    <property type="project" value="UniProtKB-UniRule"/>
</dbReference>
<dbReference type="GO" id="GO:0048038">
    <property type="term" value="F:quinone binding"/>
    <property type="evidence" value="ECO:0007669"/>
    <property type="project" value="UniProtKB-KW"/>
</dbReference>
<dbReference type="GO" id="GO:0009060">
    <property type="term" value="P:aerobic respiration"/>
    <property type="evidence" value="ECO:0007669"/>
    <property type="project" value="TreeGrafter"/>
</dbReference>
<dbReference type="GO" id="GO:0015990">
    <property type="term" value="P:electron transport coupled proton transport"/>
    <property type="evidence" value="ECO:0007669"/>
    <property type="project" value="TreeGrafter"/>
</dbReference>
<dbReference type="FunFam" id="3.40.50.12280:FF:000002">
    <property type="entry name" value="NADH-quinone oxidoreductase subunit B"/>
    <property type="match status" value="1"/>
</dbReference>
<dbReference type="Gene3D" id="3.40.50.12280">
    <property type="match status" value="1"/>
</dbReference>
<dbReference type="HAMAP" id="MF_01356">
    <property type="entry name" value="NDH1_NuoB"/>
    <property type="match status" value="1"/>
</dbReference>
<dbReference type="InterPro" id="IPR006137">
    <property type="entry name" value="NADH_UbQ_OxRdtase-like_20kDa"/>
</dbReference>
<dbReference type="InterPro" id="IPR006138">
    <property type="entry name" value="NADH_UQ_OxRdtase_20Kd_su"/>
</dbReference>
<dbReference type="NCBIfam" id="TIGR01957">
    <property type="entry name" value="nuoB_fam"/>
    <property type="match status" value="1"/>
</dbReference>
<dbReference type="NCBIfam" id="NF005012">
    <property type="entry name" value="PRK06411.1"/>
    <property type="match status" value="1"/>
</dbReference>
<dbReference type="PANTHER" id="PTHR11995">
    <property type="entry name" value="NADH DEHYDROGENASE"/>
    <property type="match status" value="1"/>
</dbReference>
<dbReference type="PANTHER" id="PTHR11995:SF14">
    <property type="entry name" value="NADH DEHYDROGENASE [UBIQUINONE] IRON-SULFUR PROTEIN 7, MITOCHONDRIAL"/>
    <property type="match status" value="1"/>
</dbReference>
<dbReference type="Pfam" id="PF01058">
    <property type="entry name" value="Oxidored_q6"/>
    <property type="match status" value="1"/>
</dbReference>
<dbReference type="SUPFAM" id="SSF56770">
    <property type="entry name" value="HydA/Nqo6-like"/>
    <property type="match status" value="1"/>
</dbReference>
<dbReference type="PROSITE" id="PS01150">
    <property type="entry name" value="COMPLEX1_20K"/>
    <property type="match status" value="1"/>
</dbReference>
<gene>
    <name evidence="1" type="primary">nuoB</name>
    <name type="ordered locus">PputW619_1872</name>
</gene>
<accession>B1J6N3</accession>
<protein>
    <recommendedName>
        <fullName evidence="1">NADH-quinone oxidoreductase subunit B</fullName>
        <ecNumber evidence="1">7.1.1.-</ecNumber>
    </recommendedName>
    <alternativeName>
        <fullName evidence="1">NADH dehydrogenase I subunit B</fullName>
    </alternativeName>
    <alternativeName>
        <fullName evidence="1">NDH-1 subunit B</fullName>
    </alternativeName>
</protein>
<name>NUOB_PSEPW</name>
<sequence>MQYNLTRIDPDAPNEQYPVGERETVTDQLLEDQVHKNIYMGKLEDVLRGAVNWGRKNSLWPYNFGLSCCYVEMTTAFTAPHDIARFGAEVIRASPRQADFMVIAGTCFIKMAPIIQRLYEQMLEPKWVISMGSCANSGGMYDIYSVVQGVDKFLPVDVYVPGCPPRPEAFLQGLMLLQESIGQERRPLSWVVGDQGIYRAEMPAQKDLRREQRIAVTNLRSPDEV</sequence>
<evidence type="ECO:0000255" key="1">
    <source>
        <dbReference type="HAMAP-Rule" id="MF_01356"/>
    </source>
</evidence>